<comment type="subcellular location">
    <subcellularLocation>
        <location evidence="4">Cytoplasm</location>
    </subcellularLocation>
</comment>
<dbReference type="EMBL" id="CU329671">
    <property type="protein sequence ID" value="CAB44763.1"/>
    <property type="molecule type" value="Genomic_DNA"/>
</dbReference>
<dbReference type="PIR" id="T40318">
    <property type="entry name" value="T40318"/>
</dbReference>
<dbReference type="SMR" id="Q9Y7X7"/>
<dbReference type="BioGRID" id="277572">
    <property type="interactions" value="2"/>
</dbReference>
<dbReference type="STRING" id="284812.Q9Y7X7"/>
<dbReference type="iPTMnet" id="Q9Y7X7"/>
<dbReference type="PaxDb" id="4896-SPBC365.11.1"/>
<dbReference type="EnsemblFungi" id="SPBC365.11.1">
    <property type="protein sequence ID" value="SPBC365.11.1:pep"/>
    <property type="gene ID" value="SPBC365.11"/>
</dbReference>
<dbReference type="KEGG" id="spo:2541057"/>
<dbReference type="PomBase" id="SPBC365.11"/>
<dbReference type="VEuPathDB" id="FungiDB:SPBC365.11"/>
<dbReference type="HOGENOM" id="CLU_1074249_0_0_1"/>
<dbReference type="InParanoid" id="Q9Y7X7"/>
<dbReference type="OMA" id="NGEHQEN"/>
<dbReference type="PhylomeDB" id="Q9Y7X7"/>
<dbReference type="PRO" id="PR:Q9Y7X7"/>
<dbReference type="Proteomes" id="UP000002485">
    <property type="component" value="Chromosome II"/>
</dbReference>
<dbReference type="GO" id="GO:0005829">
    <property type="term" value="C:cytosol"/>
    <property type="evidence" value="ECO:0007005"/>
    <property type="project" value="PomBase"/>
</dbReference>
<dbReference type="GO" id="GO:0005794">
    <property type="term" value="C:Golgi apparatus"/>
    <property type="evidence" value="ECO:0000266"/>
    <property type="project" value="PomBase"/>
</dbReference>
<dbReference type="GO" id="GO:0043001">
    <property type="term" value="P:Golgi to plasma membrane protein transport"/>
    <property type="evidence" value="ECO:0000266"/>
    <property type="project" value="PomBase"/>
</dbReference>
<dbReference type="GO" id="GO:0006886">
    <property type="term" value="P:intracellular protein transport"/>
    <property type="evidence" value="ECO:0000305"/>
    <property type="project" value="PomBase"/>
</dbReference>
<dbReference type="InterPro" id="IPR000237">
    <property type="entry name" value="GRIP_dom"/>
</dbReference>
<dbReference type="Pfam" id="PF01465">
    <property type="entry name" value="GRIP"/>
    <property type="match status" value="1"/>
</dbReference>
<dbReference type="SMART" id="SM00755">
    <property type="entry name" value="Grip"/>
    <property type="match status" value="1"/>
</dbReference>
<dbReference type="PROSITE" id="PS50913">
    <property type="entry name" value="GRIP"/>
    <property type="match status" value="1"/>
</dbReference>
<evidence type="ECO:0000255" key="1"/>
<evidence type="ECO:0000255" key="2">
    <source>
        <dbReference type="PROSITE-ProRule" id="PRU00250"/>
    </source>
</evidence>
<evidence type="ECO:0000256" key="3">
    <source>
        <dbReference type="SAM" id="MobiDB-lite"/>
    </source>
</evidence>
<evidence type="ECO:0000269" key="4">
    <source>
    </source>
</evidence>
<evidence type="ECO:0000269" key="5">
    <source>
    </source>
</evidence>
<gene>
    <name type="ORF">SPBC365.11</name>
</gene>
<reference key="1">
    <citation type="journal article" date="2002" name="Nature">
        <title>The genome sequence of Schizosaccharomyces pombe.</title>
        <authorList>
            <person name="Wood V."/>
            <person name="Gwilliam R."/>
            <person name="Rajandream M.A."/>
            <person name="Lyne M.H."/>
            <person name="Lyne R."/>
            <person name="Stewart A."/>
            <person name="Sgouros J.G."/>
            <person name="Peat N."/>
            <person name="Hayles J."/>
            <person name="Baker S.G."/>
            <person name="Basham D."/>
            <person name="Bowman S."/>
            <person name="Brooks K."/>
            <person name="Brown D."/>
            <person name="Brown S."/>
            <person name="Chillingworth T."/>
            <person name="Churcher C.M."/>
            <person name="Collins M."/>
            <person name="Connor R."/>
            <person name="Cronin A."/>
            <person name="Davis P."/>
            <person name="Feltwell T."/>
            <person name="Fraser A."/>
            <person name="Gentles S."/>
            <person name="Goble A."/>
            <person name="Hamlin N."/>
            <person name="Harris D.E."/>
            <person name="Hidalgo J."/>
            <person name="Hodgson G."/>
            <person name="Holroyd S."/>
            <person name="Hornsby T."/>
            <person name="Howarth S."/>
            <person name="Huckle E.J."/>
            <person name="Hunt S."/>
            <person name="Jagels K."/>
            <person name="James K.D."/>
            <person name="Jones L."/>
            <person name="Jones M."/>
            <person name="Leather S."/>
            <person name="McDonald S."/>
            <person name="McLean J."/>
            <person name="Mooney P."/>
            <person name="Moule S."/>
            <person name="Mungall K.L."/>
            <person name="Murphy L.D."/>
            <person name="Niblett D."/>
            <person name="Odell C."/>
            <person name="Oliver K."/>
            <person name="O'Neil S."/>
            <person name="Pearson D."/>
            <person name="Quail M.A."/>
            <person name="Rabbinowitsch E."/>
            <person name="Rutherford K.M."/>
            <person name="Rutter S."/>
            <person name="Saunders D."/>
            <person name="Seeger K."/>
            <person name="Sharp S."/>
            <person name="Skelton J."/>
            <person name="Simmonds M.N."/>
            <person name="Squares R."/>
            <person name="Squares S."/>
            <person name="Stevens K."/>
            <person name="Taylor K."/>
            <person name="Taylor R.G."/>
            <person name="Tivey A."/>
            <person name="Walsh S.V."/>
            <person name="Warren T."/>
            <person name="Whitehead S."/>
            <person name="Woodward J.R."/>
            <person name="Volckaert G."/>
            <person name="Aert R."/>
            <person name="Robben J."/>
            <person name="Grymonprez B."/>
            <person name="Weltjens I."/>
            <person name="Vanstreels E."/>
            <person name="Rieger M."/>
            <person name="Schaefer M."/>
            <person name="Mueller-Auer S."/>
            <person name="Gabel C."/>
            <person name="Fuchs M."/>
            <person name="Duesterhoeft A."/>
            <person name="Fritzc C."/>
            <person name="Holzer E."/>
            <person name="Moestl D."/>
            <person name="Hilbert H."/>
            <person name="Borzym K."/>
            <person name="Langer I."/>
            <person name="Beck A."/>
            <person name="Lehrach H."/>
            <person name="Reinhardt R."/>
            <person name="Pohl T.M."/>
            <person name="Eger P."/>
            <person name="Zimmermann W."/>
            <person name="Wedler H."/>
            <person name="Wambutt R."/>
            <person name="Purnelle B."/>
            <person name="Goffeau A."/>
            <person name="Cadieu E."/>
            <person name="Dreano S."/>
            <person name="Gloux S."/>
            <person name="Lelaure V."/>
            <person name="Mottier S."/>
            <person name="Galibert F."/>
            <person name="Aves S.J."/>
            <person name="Xiang Z."/>
            <person name="Hunt C."/>
            <person name="Moore K."/>
            <person name="Hurst S.M."/>
            <person name="Lucas M."/>
            <person name="Rochet M."/>
            <person name="Gaillardin C."/>
            <person name="Tallada V.A."/>
            <person name="Garzon A."/>
            <person name="Thode G."/>
            <person name="Daga R.R."/>
            <person name="Cruzado L."/>
            <person name="Jimenez J."/>
            <person name="Sanchez M."/>
            <person name="del Rey F."/>
            <person name="Benito J."/>
            <person name="Dominguez A."/>
            <person name="Revuelta J.L."/>
            <person name="Moreno S."/>
            <person name="Armstrong J."/>
            <person name="Forsburg S.L."/>
            <person name="Cerutti L."/>
            <person name="Lowe T."/>
            <person name="McCombie W.R."/>
            <person name="Paulsen I."/>
            <person name="Potashkin J."/>
            <person name="Shpakovski G.V."/>
            <person name="Ussery D."/>
            <person name="Barrell B.G."/>
            <person name="Nurse P."/>
        </authorList>
    </citation>
    <scope>NUCLEOTIDE SEQUENCE [LARGE SCALE GENOMIC DNA]</scope>
    <source>
        <strain>972 / ATCC 24843</strain>
    </source>
</reference>
<reference key="2">
    <citation type="journal article" date="2006" name="Nat. Biotechnol.">
        <title>ORFeome cloning and global analysis of protein localization in the fission yeast Schizosaccharomyces pombe.</title>
        <authorList>
            <person name="Matsuyama A."/>
            <person name="Arai R."/>
            <person name="Yashiroda Y."/>
            <person name="Shirai A."/>
            <person name="Kamata A."/>
            <person name="Sekido S."/>
            <person name="Kobayashi Y."/>
            <person name="Hashimoto A."/>
            <person name="Hamamoto M."/>
            <person name="Hiraoka Y."/>
            <person name="Horinouchi S."/>
            <person name="Yoshida M."/>
        </authorList>
    </citation>
    <scope>SUBCELLULAR LOCATION [LARGE SCALE ANALYSIS]</scope>
</reference>
<reference key="3">
    <citation type="journal article" date="2008" name="J. Proteome Res.">
        <title>Phosphoproteome analysis of fission yeast.</title>
        <authorList>
            <person name="Wilson-Grady J.T."/>
            <person name="Villen J."/>
            <person name="Gygi S.P."/>
        </authorList>
    </citation>
    <scope>PHOSPHORYLATION [LARGE SCALE ANALYSIS] AT SER-10; SER-202 AND SER-204</scope>
    <scope>IDENTIFICATION BY MASS SPECTROMETRY</scope>
</reference>
<keyword id="KW-0175">Coiled coil</keyword>
<keyword id="KW-0963">Cytoplasm</keyword>
<keyword id="KW-0597">Phosphoprotein</keyword>
<keyword id="KW-1185">Reference proteome</keyword>
<organism>
    <name type="scientific">Schizosaccharomyces pombe (strain 972 / ATCC 24843)</name>
    <name type="common">Fission yeast</name>
    <dbReference type="NCBI Taxonomy" id="284812"/>
    <lineage>
        <taxon>Eukaryota</taxon>
        <taxon>Fungi</taxon>
        <taxon>Dikarya</taxon>
        <taxon>Ascomycota</taxon>
        <taxon>Taphrinomycotina</taxon>
        <taxon>Schizosaccharomycetes</taxon>
        <taxon>Schizosaccharomycetales</taxon>
        <taxon>Schizosaccharomycetaceae</taxon>
        <taxon>Schizosaccharomyces</taxon>
    </lineage>
</organism>
<feature type="chain" id="PRO_0000317082" description="GRIP and coiled-coil domain-containing protein C365.11">
    <location>
        <begin position="1"/>
        <end position="266"/>
    </location>
</feature>
<feature type="domain" description="GRIP" evidence="2">
    <location>
        <begin position="216"/>
        <end position="264"/>
    </location>
</feature>
<feature type="region of interest" description="Disordered" evidence="3">
    <location>
        <begin position="1"/>
        <end position="88"/>
    </location>
</feature>
<feature type="coiled-coil region" evidence="1">
    <location>
        <begin position="73"/>
        <end position="188"/>
    </location>
</feature>
<feature type="compositionally biased region" description="Polar residues" evidence="3">
    <location>
        <begin position="1"/>
        <end position="13"/>
    </location>
</feature>
<feature type="compositionally biased region" description="Basic residues" evidence="3">
    <location>
        <begin position="36"/>
        <end position="49"/>
    </location>
</feature>
<feature type="compositionally biased region" description="Basic and acidic residues" evidence="3">
    <location>
        <begin position="63"/>
        <end position="88"/>
    </location>
</feature>
<feature type="modified residue" description="Phosphoserine" evidence="5">
    <location>
        <position position="10"/>
    </location>
</feature>
<feature type="modified residue" description="Phosphoserine" evidence="5">
    <location>
        <position position="202"/>
    </location>
</feature>
<feature type="modified residue" description="Phosphoserine" evidence="5">
    <location>
        <position position="204"/>
    </location>
</feature>
<accession>Q9Y7X7</accession>
<proteinExistence type="evidence at protein level"/>
<protein>
    <recommendedName>
        <fullName>GRIP and coiled-coil domain-containing protein C365.11</fullName>
    </recommendedName>
</protein>
<name>YGRB_SCHPO</name>
<sequence>METTVSAKNSLENENFLKEKSETVFLDEAAITKPPASKKKRKNRKKKKNNGPSEQFVGNNDLEEQRSGSIDSKDKEKPLDEKVKELENANKTLSDLVRRIQIQRDEAEQKAEIYNRDALNTKQEHLDIKKRLEKSDETVCKLKEENENLQDMLRNVGNELVESRDEIKELIEKQKVQKESVKSHESELSSVMSSEILPKASSDSAGSFEPPVISNISKELINKEYARNVLLQFLENHEHRDKILPILSTALDLEEVHQHLILKNLN</sequence>